<organism>
    <name type="scientific">Streptococcus pneumoniae (strain Hungary19A-6)</name>
    <dbReference type="NCBI Taxonomy" id="487214"/>
    <lineage>
        <taxon>Bacteria</taxon>
        <taxon>Bacillati</taxon>
        <taxon>Bacillota</taxon>
        <taxon>Bacilli</taxon>
        <taxon>Lactobacillales</taxon>
        <taxon>Streptococcaceae</taxon>
        <taxon>Streptococcus</taxon>
    </lineage>
</organism>
<accession>B1I8L6</accession>
<comment type="subunit">
    <text evidence="1">Part of the 50S ribosomal subunit.</text>
</comment>
<comment type="similarity">
    <text evidence="1">Belongs to the universal ribosomal protein uL30 family.</text>
</comment>
<protein>
    <recommendedName>
        <fullName evidence="1">Large ribosomal subunit protein uL30</fullName>
    </recommendedName>
    <alternativeName>
        <fullName evidence="2">50S ribosomal protein L30</fullName>
    </alternativeName>
</protein>
<sequence>MAQIKITLTKSPIGRIPSQRKTVVALGLGKLNSFVIKEDNAAIRGMITAVSHLVTVEEVN</sequence>
<keyword id="KW-0687">Ribonucleoprotein</keyword>
<keyword id="KW-0689">Ribosomal protein</keyword>
<dbReference type="EMBL" id="CP000936">
    <property type="protein sequence ID" value="ACA37428.1"/>
    <property type="molecule type" value="Genomic_DNA"/>
</dbReference>
<dbReference type="RefSeq" id="WP_000057240.1">
    <property type="nucleotide sequence ID" value="NC_010380.1"/>
</dbReference>
<dbReference type="SMR" id="B1I8L6"/>
<dbReference type="KEGG" id="spv:SPH_0341"/>
<dbReference type="HOGENOM" id="CLU_131047_2_1_9"/>
<dbReference type="Proteomes" id="UP000002163">
    <property type="component" value="Chromosome"/>
</dbReference>
<dbReference type="GO" id="GO:0022625">
    <property type="term" value="C:cytosolic large ribosomal subunit"/>
    <property type="evidence" value="ECO:0007669"/>
    <property type="project" value="TreeGrafter"/>
</dbReference>
<dbReference type="GO" id="GO:0003735">
    <property type="term" value="F:structural constituent of ribosome"/>
    <property type="evidence" value="ECO:0007669"/>
    <property type="project" value="InterPro"/>
</dbReference>
<dbReference type="GO" id="GO:0006412">
    <property type="term" value="P:translation"/>
    <property type="evidence" value="ECO:0007669"/>
    <property type="project" value="UniProtKB-UniRule"/>
</dbReference>
<dbReference type="CDD" id="cd01658">
    <property type="entry name" value="Ribosomal_L30"/>
    <property type="match status" value="1"/>
</dbReference>
<dbReference type="FunFam" id="3.30.1390.20:FF:000001">
    <property type="entry name" value="50S ribosomal protein L30"/>
    <property type="match status" value="1"/>
</dbReference>
<dbReference type="Gene3D" id="3.30.1390.20">
    <property type="entry name" value="Ribosomal protein L30, ferredoxin-like fold domain"/>
    <property type="match status" value="1"/>
</dbReference>
<dbReference type="HAMAP" id="MF_01371_B">
    <property type="entry name" value="Ribosomal_uL30_B"/>
    <property type="match status" value="1"/>
</dbReference>
<dbReference type="InterPro" id="IPR036919">
    <property type="entry name" value="Ribo_uL30_ferredoxin-like_sf"/>
</dbReference>
<dbReference type="InterPro" id="IPR005996">
    <property type="entry name" value="Ribosomal_uL30_bac-type"/>
</dbReference>
<dbReference type="InterPro" id="IPR018038">
    <property type="entry name" value="Ribosomal_uL30_CS"/>
</dbReference>
<dbReference type="InterPro" id="IPR016082">
    <property type="entry name" value="Ribosomal_uL30_ferredoxin-like"/>
</dbReference>
<dbReference type="NCBIfam" id="TIGR01308">
    <property type="entry name" value="rpmD_bact"/>
    <property type="match status" value="1"/>
</dbReference>
<dbReference type="PANTHER" id="PTHR15892:SF2">
    <property type="entry name" value="LARGE RIBOSOMAL SUBUNIT PROTEIN UL30M"/>
    <property type="match status" value="1"/>
</dbReference>
<dbReference type="PANTHER" id="PTHR15892">
    <property type="entry name" value="MITOCHONDRIAL RIBOSOMAL PROTEIN L30"/>
    <property type="match status" value="1"/>
</dbReference>
<dbReference type="Pfam" id="PF00327">
    <property type="entry name" value="Ribosomal_L30"/>
    <property type="match status" value="1"/>
</dbReference>
<dbReference type="PIRSF" id="PIRSF002211">
    <property type="entry name" value="Ribosomal_L30_bac-type"/>
    <property type="match status" value="1"/>
</dbReference>
<dbReference type="SUPFAM" id="SSF55129">
    <property type="entry name" value="Ribosomal protein L30p/L7e"/>
    <property type="match status" value="1"/>
</dbReference>
<dbReference type="PROSITE" id="PS00634">
    <property type="entry name" value="RIBOSOMAL_L30"/>
    <property type="match status" value="1"/>
</dbReference>
<feature type="chain" id="PRO_1000144725" description="Large ribosomal subunit protein uL30">
    <location>
        <begin position="1"/>
        <end position="60"/>
    </location>
</feature>
<evidence type="ECO:0000255" key="1">
    <source>
        <dbReference type="HAMAP-Rule" id="MF_01371"/>
    </source>
</evidence>
<evidence type="ECO:0000305" key="2"/>
<reference key="1">
    <citation type="journal article" date="2010" name="Genome Biol.">
        <title>Structure and dynamics of the pan-genome of Streptococcus pneumoniae and closely related species.</title>
        <authorList>
            <person name="Donati C."/>
            <person name="Hiller N.L."/>
            <person name="Tettelin H."/>
            <person name="Muzzi A."/>
            <person name="Croucher N.J."/>
            <person name="Angiuoli S.V."/>
            <person name="Oggioni M."/>
            <person name="Dunning Hotopp J.C."/>
            <person name="Hu F.Z."/>
            <person name="Riley D.R."/>
            <person name="Covacci A."/>
            <person name="Mitchell T.J."/>
            <person name="Bentley S.D."/>
            <person name="Kilian M."/>
            <person name="Ehrlich G.D."/>
            <person name="Rappuoli R."/>
            <person name="Moxon E.R."/>
            <person name="Masignani V."/>
        </authorList>
    </citation>
    <scope>NUCLEOTIDE SEQUENCE [LARGE SCALE GENOMIC DNA]</scope>
    <source>
        <strain>Hungary19A-6</strain>
    </source>
</reference>
<gene>
    <name evidence="1" type="primary">rpmD</name>
    <name type="ordered locus">SPH_0341</name>
</gene>
<proteinExistence type="inferred from homology"/>
<name>RL30_STRPI</name>